<sequence length="256" mass="27595">MSHVSICLLSEAGADPGALSILADRWGLVSDDQAVMALVLTAERLELRKRDEPKLGGIYVDFVSGTQAHRRKFGGGRGEAVAKAVGIKKGYLPRVVDATAGLGRDAFVLAALGCQVQMLERNPVVAALLDDGLRRGYLDAEIGPWLRERLTLLHASSLTALVAIEPRPEVVYLDPMYPHRQKSALVKKEMRVFQSLVGADNDADGLLAPARALATKRVVVKRPDYAEPLAGVAAQAAVVTKSHRFDIYPSSVTPPR</sequence>
<organism>
    <name type="scientific">Yersinia pseudotuberculosis serotype IB (strain PB1/+)</name>
    <dbReference type="NCBI Taxonomy" id="502801"/>
    <lineage>
        <taxon>Bacteria</taxon>
        <taxon>Pseudomonadati</taxon>
        <taxon>Pseudomonadota</taxon>
        <taxon>Gammaproteobacteria</taxon>
        <taxon>Enterobacterales</taxon>
        <taxon>Yersiniaceae</taxon>
        <taxon>Yersinia</taxon>
    </lineage>
</organism>
<keyword id="KW-0963">Cytoplasm</keyword>
<keyword id="KW-0489">Methyltransferase</keyword>
<keyword id="KW-0698">rRNA processing</keyword>
<keyword id="KW-0949">S-adenosyl-L-methionine</keyword>
<keyword id="KW-0808">Transferase</keyword>
<accession>B2K6K6</accession>
<comment type="function">
    <text evidence="1">Specifically methylates the guanosine in position 1516 of 16S rRNA.</text>
</comment>
<comment type="catalytic activity">
    <reaction evidence="1">
        <text>guanosine(1516) in 16S rRNA + S-adenosyl-L-methionine = N(2)-methylguanosine(1516) in 16S rRNA + S-adenosyl-L-homocysteine + H(+)</text>
        <dbReference type="Rhea" id="RHEA:43220"/>
        <dbReference type="Rhea" id="RHEA-COMP:10412"/>
        <dbReference type="Rhea" id="RHEA-COMP:10413"/>
        <dbReference type="ChEBI" id="CHEBI:15378"/>
        <dbReference type="ChEBI" id="CHEBI:57856"/>
        <dbReference type="ChEBI" id="CHEBI:59789"/>
        <dbReference type="ChEBI" id="CHEBI:74269"/>
        <dbReference type="ChEBI" id="CHEBI:74481"/>
        <dbReference type="EC" id="2.1.1.242"/>
    </reaction>
</comment>
<comment type="subcellular location">
    <subcellularLocation>
        <location evidence="1">Cytoplasm</location>
    </subcellularLocation>
</comment>
<comment type="similarity">
    <text evidence="1">Belongs to the methyltransferase superfamily. RsmJ family.</text>
</comment>
<proteinExistence type="inferred from homology"/>
<feature type="chain" id="PRO_1000198516" description="Ribosomal RNA small subunit methyltransferase J">
    <location>
        <begin position="1"/>
        <end position="256"/>
    </location>
</feature>
<feature type="binding site" evidence="1">
    <location>
        <begin position="104"/>
        <end position="105"/>
    </location>
    <ligand>
        <name>S-adenosyl-L-methionine</name>
        <dbReference type="ChEBI" id="CHEBI:59789"/>
    </ligand>
</feature>
<feature type="binding site" evidence="1">
    <location>
        <begin position="120"/>
        <end position="121"/>
    </location>
    <ligand>
        <name>S-adenosyl-L-methionine</name>
        <dbReference type="ChEBI" id="CHEBI:59789"/>
    </ligand>
</feature>
<feature type="binding site" evidence="1">
    <location>
        <begin position="156"/>
        <end position="157"/>
    </location>
    <ligand>
        <name>S-adenosyl-L-methionine</name>
        <dbReference type="ChEBI" id="CHEBI:59789"/>
    </ligand>
</feature>
<feature type="binding site" evidence="1">
    <location>
        <position position="174"/>
    </location>
    <ligand>
        <name>S-adenosyl-L-methionine</name>
        <dbReference type="ChEBI" id="CHEBI:59789"/>
    </ligand>
</feature>
<evidence type="ECO:0000255" key="1">
    <source>
        <dbReference type="HAMAP-Rule" id="MF_01523"/>
    </source>
</evidence>
<name>RSMJ_YERPB</name>
<reference key="1">
    <citation type="submission" date="2008-04" db="EMBL/GenBank/DDBJ databases">
        <title>Complete sequence of Yersinia pseudotuberculosis PB1/+.</title>
        <authorList>
            <person name="Copeland A."/>
            <person name="Lucas S."/>
            <person name="Lapidus A."/>
            <person name="Glavina del Rio T."/>
            <person name="Dalin E."/>
            <person name="Tice H."/>
            <person name="Bruce D."/>
            <person name="Goodwin L."/>
            <person name="Pitluck S."/>
            <person name="Munk A.C."/>
            <person name="Brettin T."/>
            <person name="Detter J.C."/>
            <person name="Han C."/>
            <person name="Tapia R."/>
            <person name="Schmutz J."/>
            <person name="Larimer F."/>
            <person name="Land M."/>
            <person name="Hauser L."/>
            <person name="Challacombe J.F."/>
            <person name="Green L."/>
            <person name="Lindler L.E."/>
            <person name="Nikolich M.P."/>
            <person name="Richardson P."/>
        </authorList>
    </citation>
    <scope>NUCLEOTIDE SEQUENCE [LARGE SCALE GENOMIC DNA]</scope>
    <source>
        <strain>PB1/+</strain>
    </source>
</reference>
<protein>
    <recommendedName>
        <fullName evidence="1">Ribosomal RNA small subunit methyltransferase J</fullName>
        <ecNumber evidence="1">2.1.1.242</ecNumber>
    </recommendedName>
    <alternativeName>
        <fullName evidence="1">16S rRNA m2G1516 methyltransferase</fullName>
    </alternativeName>
    <alternativeName>
        <fullName evidence="1">rRNA (guanine-N(2)-)-methyltransferase</fullName>
    </alternativeName>
</protein>
<gene>
    <name evidence="1" type="primary">rsmJ</name>
    <name type="ordered locus">YPTS_4029</name>
</gene>
<dbReference type="EC" id="2.1.1.242" evidence="1"/>
<dbReference type="EMBL" id="CP001048">
    <property type="protein sequence ID" value="ACC90978.1"/>
    <property type="molecule type" value="Genomic_DNA"/>
</dbReference>
<dbReference type="RefSeq" id="WP_002215483.1">
    <property type="nucleotide sequence ID" value="NZ_CP009780.1"/>
</dbReference>
<dbReference type="SMR" id="B2K6K6"/>
<dbReference type="GeneID" id="96663312"/>
<dbReference type="KEGG" id="ypb:YPTS_4029"/>
<dbReference type="PATRIC" id="fig|502801.10.peg.3498"/>
<dbReference type="GO" id="GO:0005737">
    <property type="term" value="C:cytoplasm"/>
    <property type="evidence" value="ECO:0007669"/>
    <property type="project" value="UniProtKB-SubCell"/>
</dbReference>
<dbReference type="GO" id="GO:0008990">
    <property type="term" value="F:rRNA (guanine-N2-)-methyltransferase activity"/>
    <property type="evidence" value="ECO:0007669"/>
    <property type="project" value="UniProtKB-UniRule"/>
</dbReference>
<dbReference type="CDD" id="cd02440">
    <property type="entry name" value="AdoMet_MTases"/>
    <property type="match status" value="1"/>
</dbReference>
<dbReference type="Gene3D" id="3.40.50.150">
    <property type="entry name" value="Vaccinia Virus protein VP39"/>
    <property type="match status" value="1"/>
</dbReference>
<dbReference type="Gene3D" id="3.40.1630.10">
    <property type="entry name" value="YhiQ-like domain"/>
    <property type="match status" value="1"/>
</dbReference>
<dbReference type="HAMAP" id="MF_01523">
    <property type="entry name" value="16SrRNA_methyltr_J"/>
    <property type="match status" value="1"/>
</dbReference>
<dbReference type="InterPro" id="IPR007536">
    <property type="entry name" value="16SrRNA_methylTrfase_J"/>
</dbReference>
<dbReference type="InterPro" id="IPR029063">
    <property type="entry name" value="SAM-dependent_MTases_sf"/>
</dbReference>
<dbReference type="NCBIfam" id="NF008012">
    <property type="entry name" value="PRK10742.1"/>
    <property type="match status" value="1"/>
</dbReference>
<dbReference type="PANTHER" id="PTHR36112">
    <property type="entry name" value="RIBOSOMAL RNA SMALL SUBUNIT METHYLTRANSFERASE J"/>
    <property type="match status" value="1"/>
</dbReference>
<dbReference type="PANTHER" id="PTHR36112:SF1">
    <property type="entry name" value="RIBOSOMAL RNA SMALL SUBUNIT METHYLTRANSFERASE J"/>
    <property type="match status" value="1"/>
</dbReference>
<dbReference type="Pfam" id="PF04445">
    <property type="entry name" value="SAM_MT"/>
    <property type="match status" value="1"/>
</dbReference>
<dbReference type="SUPFAM" id="SSF53335">
    <property type="entry name" value="S-adenosyl-L-methionine-dependent methyltransferases"/>
    <property type="match status" value="1"/>
</dbReference>